<proteinExistence type="inferred from homology"/>
<organism>
    <name type="scientific">Emericella nidulans (strain FGSC A4 / ATCC 38163 / CBS 112.46 / NRRL 194 / M139)</name>
    <name type="common">Aspergillus nidulans</name>
    <dbReference type="NCBI Taxonomy" id="227321"/>
    <lineage>
        <taxon>Eukaryota</taxon>
        <taxon>Fungi</taxon>
        <taxon>Dikarya</taxon>
        <taxon>Ascomycota</taxon>
        <taxon>Pezizomycotina</taxon>
        <taxon>Eurotiomycetes</taxon>
        <taxon>Eurotiomycetidae</taxon>
        <taxon>Eurotiales</taxon>
        <taxon>Aspergillaceae</taxon>
        <taxon>Aspergillus</taxon>
        <taxon>Aspergillus subgen. Nidulantes</taxon>
    </lineage>
</organism>
<reference key="1">
    <citation type="journal article" date="2005" name="Nature">
        <title>Sequencing of Aspergillus nidulans and comparative analysis with A. fumigatus and A. oryzae.</title>
        <authorList>
            <person name="Galagan J.E."/>
            <person name="Calvo S.E."/>
            <person name="Cuomo C."/>
            <person name="Ma L.-J."/>
            <person name="Wortman J.R."/>
            <person name="Batzoglou S."/>
            <person name="Lee S.-I."/>
            <person name="Bastuerkmen M."/>
            <person name="Spevak C.C."/>
            <person name="Clutterbuck J."/>
            <person name="Kapitonov V."/>
            <person name="Jurka J."/>
            <person name="Scazzocchio C."/>
            <person name="Farman M.L."/>
            <person name="Butler J."/>
            <person name="Purcell S."/>
            <person name="Harris S."/>
            <person name="Braus G.H."/>
            <person name="Draht O."/>
            <person name="Busch S."/>
            <person name="D'Enfert C."/>
            <person name="Bouchier C."/>
            <person name="Goldman G.H."/>
            <person name="Bell-Pedersen D."/>
            <person name="Griffiths-Jones S."/>
            <person name="Doonan J.H."/>
            <person name="Yu J."/>
            <person name="Vienken K."/>
            <person name="Pain A."/>
            <person name="Freitag M."/>
            <person name="Selker E.U."/>
            <person name="Archer D.B."/>
            <person name="Penalva M.A."/>
            <person name="Oakley B.R."/>
            <person name="Momany M."/>
            <person name="Tanaka T."/>
            <person name="Kumagai T."/>
            <person name="Asai K."/>
            <person name="Machida M."/>
            <person name="Nierman W.C."/>
            <person name="Denning D.W."/>
            <person name="Caddick M.X."/>
            <person name="Hynes M."/>
            <person name="Paoletti M."/>
            <person name="Fischer R."/>
            <person name="Miller B.L."/>
            <person name="Dyer P.S."/>
            <person name="Sachs M.S."/>
            <person name="Osmani S.A."/>
            <person name="Birren B.W."/>
        </authorList>
    </citation>
    <scope>NUCLEOTIDE SEQUENCE [LARGE SCALE GENOMIC DNA]</scope>
    <source>
        <strain>FGSC A4 / ATCC 38163 / CBS 112.46 / NRRL 194 / M139</strain>
    </source>
</reference>
<reference key="2">
    <citation type="journal article" date="2009" name="Fungal Genet. Biol.">
        <title>The 2008 update of the Aspergillus nidulans genome annotation: a community effort.</title>
        <authorList>
            <person name="Wortman J.R."/>
            <person name="Gilsenan J.M."/>
            <person name="Joardar V."/>
            <person name="Deegan J."/>
            <person name="Clutterbuck J."/>
            <person name="Andersen M.R."/>
            <person name="Archer D."/>
            <person name="Bencina M."/>
            <person name="Braus G."/>
            <person name="Coutinho P."/>
            <person name="von Dohren H."/>
            <person name="Doonan J."/>
            <person name="Driessen A.J."/>
            <person name="Durek P."/>
            <person name="Espeso E."/>
            <person name="Fekete E."/>
            <person name="Flipphi M."/>
            <person name="Estrada C.G."/>
            <person name="Geysens S."/>
            <person name="Goldman G."/>
            <person name="de Groot P.W."/>
            <person name="Hansen K."/>
            <person name="Harris S.D."/>
            <person name="Heinekamp T."/>
            <person name="Helmstaedt K."/>
            <person name="Henrissat B."/>
            <person name="Hofmann G."/>
            <person name="Homan T."/>
            <person name="Horio T."/>
            <person name="Horiuchi H."/>
            <person name="James S."/>
            <person name="Jones M."/>
            <person name="Karaffa L."/>
            <person name="Karanyi Z."/>
            <person name="Kato M."/>
            <person name="Keller N."/>
            <person name="Kelly D.E."/>
            <person name="Kiel J.A."/>
            <person name="Kim J.M."/>
            <person name="van der Klei I.J."/>
            <person name="Klis F.M."/>
            <person name="Kovalchuk A."/>
            <person name="Krasevec N."/>
            <person name="Kubicek C.P."/>
            <person name="Liu B."/>
            <person name="Maccabe A."/>
            <person name="Meyer V."/>
            <person name="Mirabito P."/>
            <person name="Miskei M."/>
            <person name="Mos M."/>
            <person name="Mullins J."/>
            <person name="Nelson D.R."/>
            <person name="Nielsen J."/>
            <person name="Oakley B.R."/>
            <person name="Osmani S.A."/>
            <person name="Pakula T."/>
            <person name="Paszewski A."/>
            <person name="Paulsen I."/>
            <person name="Pilsyk S."/>
            <person name="Pocsi I."/>
            <person name="Punt P.J."/>
            <person name="Ram A.F."/>
            <person name="Ren Q."/>
            <person name="Robellet X."/>
            <person name="Robson G."/>
            <person name="Seiboth B."/>
            <person name="van Solingen P."/>
            <person name="Specht T."/>
            <person name="Sun J."/>
            <person name="Taheri-Talesh N."/>
            <person name="Takeshita N."/>
            <person name="Ussery D."/>
            <person name="vanKuyk P.A."/>
            <person name="Visser H."/>
            <person name="van de Vondervoort P.J."/>
            <person name="de Vries R.P."/>
            <person name="Walton J."/>
            <person name="Xiang X."/>
            <person name="Xiong Y."/>
            <person name="Zeng A.P."/>
            <person name="Brandt B.W."/>
            <person name="Cornell M.J."/>
            <person name="van den Hondel C.A."/>
            <person name="Visser J."/>
            <person name="Oliver S.G."/>
            <person name="Turner G."/>
        </authorList>
    </citation>
    <scope>GENOME REANNOTATION</scope>
    <source>
        <strain>FGSC A4 / ATCC 38163 / CBS 112.46 / NRRL 194 / M139</strain>
    </source>
</reference>
<protein>
    <recommendedName>
        <fullName>Leucine carboxyl methyltransferase 1</fullName>
        <ecNumber>2.1.1.233</ecNumber>
    </recommendedName>
    <alternativeName>
        <fullName>Protein phosphatase methyltransferase 1</fullName>
    </alternativeName>
    <alternativeName>
        <fullName>[Phosphatase 2A protein]-leucine-carboxy methyltransferase 1</fullName>
    </alternativeName>
</protein>
<feature type="chain" id="PRO_0000226128" description="Leucine carboxyl methyltransferase 1">
    <location>
        <begin position="1"/>
        <end position="382"/>
    </location>
</feature>
<feature type="region of interest" description="Disordered" evidence="2">
    <location>
        <begin position="1"/>
        <end position="45"/>
    </location>
</feature>
<feature type="compositionally biased region" description="Polar residues" evidence="2">
    <location>
        <begin position="1"/>
        <end position="11"/>
    </location>
</feature>
<feature type="binding site" evidence="1">
    <location>
        <position position="88"/>
    </location>
    <ligand>
        <name>S-adenosyl-L-methionine</name>
        <dbReference type="ChEBI" id="CHEBI:59789"/>
    </ligand>
</feature>
<feature type="binding site" evidence="1">
    <location>
        <position position="121"/>
    </location>
    <ligand>
        <name>S-adenosyl-L-methionine</name>
        <dbReference type="ChEBI" id="CHEBI:59789"/>
    </ligand>
</feature>
<feature type="binding site" evidence="1">
    <location>
        <position position="146"/>
    </location>
    <ligand>
        <name>S-adenosyl-L-methionine</name>
        <dbReference type="ChEBI" id="CHEBI:59789"/>
    </ligand>
</feature>
<feature type="binding site" evidence="1">
    <location>
        <begin position="193"/>
        <end position="194"/>
    </location>
    <ligand>
        <name>S-adenosyl-L-methionine</name>
        <dbReference type="ChEBI" id="CHEBI:59789"/>
    </ligand>
</feature>
<feature type="binding site" evidence="1">
    <location>
        <position position="230"/>
    </location>
    <ligand>
        <name>S-adenosyl-L-methionine</name>
        <dbReference type="ChEBI" id="CHEBI:59789"/>
    </ligand>
</feature>
<feature type="sequence conflict" description="In Ref. 1; EAA66818." evidence="3" ref="1">
    <original>K</original>
    <variation>D</variation>
    <location>
        <position position="364"/>
    </location>
</feature>
<gene>
    <name type="primary">ppm1</name>
    <name type="ORF">AN9438</name>
</gene>
<dbReference type="EC" id="2.1.1.233"/>
<dbReference type="EMBL" id="AACD01000180">
    <property type="protein sequence ID" value="EAA66818.1"/>
    <property type="molecule type" value="Genomic_DNA"/>
</dbReference>
<dbReference type="EMBL" id="BN001308">
    <property type="protein sequence ID" value="CBF88905.1"/>
    <property type="molecule type" value="Genomic_DNA"/>
</dbReference>
<dbReference type="RefSeq" id="XP_868820.1">
    <property type="nucleotide sequence ID" value="XM_863727.1"/>
</dbReference>
<dbReference type="SMR" id="Q5AQJ2"/>
<dbReference type="FunCoup" id="Q5AQJ2">
    <property type="interactions" value="528"/>
</dbReference>
<dbReference type="STRING" id="227321.Q5AQJ2"/>
<dbReference type="EnsemblFungi" id="CBF88905">
    <property type="protein sequence ID" value="CBF88905"/>
    <property type="gene ID" value="ANIA_09438"/>
</dbReference>
<dbReference type="KEGG" id="ani:ANIA_09438"/>
<dbReference type="VEuPathDB" id="FungiDB:AN9438"/>
<dbReference type="eggNOG" id="KOG2918">
    <property type="taxonomic scope" value="Eukaryota"/>
</dbReference>
<dbReference type="HOGENOM" id="CLU_031312_1_1_1"/>
<dbReference type="InParanoid" id="Q5AQJ2"/>
<dbReference type="OMA" id="IIYEPIR"/>
<dbReference type="OrthoDB" id="203237at2759"/>
<dbReference type="Proteomes" id="UP000000560">
    <property type="component" value="Chromosome VIII"/>
</dbReference>
<dbReference type="GO" id="GO:0018423">
    <property type="term" value="F:protein C-terminal leucine carboxyl O-methyltransferase activity"/>
    <property type="evidence" value="ECO:0000318"/>
    <property type="project" value="GO_Central"/>
</dbReference>
<dbReference type="GO" id="GO:0032259">
    <property type="term" value="P:methylation"/>
    <property type="evidence" value="ECO:0007669"/>
    <property type="project" value="UniProtKB-KW"/>
</dbReference>
<dbReference type="FunFam" id="3.40.50.150:FF:000369">
    <property type="entry name" value="Leucine carboxyl methyltransferase 1"/>
    <property type="match status" value="1"/>
</dbReference>
<dbReference type="Gene3D" id="3.40.50.150">
    <property type="entry name" value="Vaccinia Virus protein VP39"/>
    <property type="match status" value="1"/>
</dbReference>
<dbReference type="InterPro" id="IPR016651">
    <property type="entry name" value="LCMT1"/>
</dbReference>
<dbReference type="InterPro" id="IPR007213">
    <property type="entry name" value="Ppm1/Ppm2/Tcmp"/>
</dbReference>
<dbReference type="InterPro" id="IPR029063">
    <property type="entry name" value="SAM-dependent_MTases_sf"/>
</dbReference>
<dbReference type="PANTHER" id="PTHR13600">
    <property type="entry name" value="LEUCINE CARBOXYL METHYLTRANSFERASE"/>
    <property type="match status" value="1"/>
</dbReference>
<dbReference type="PANTHER" id="PTHR13600:SF21">
    <property type="entry name" value="LEUCINE CARBOXYL METHYLTRANSFERASE 1"/>
    <property type="match status" value="1"/>
</dbReference>
<dbReference type="Pfam" id="PF04072">
    <property type="entry name" value="LCM"/>
    <property type="match status" value="1"/>
</dbReference>
<dbReference type="PIRSF" id="PIRSF016305">
    <property type="entry name" value="LCM_mtfrase"/>
    <property type="match status" value="1"/>
</dbReference>
<dbReference type="SUPFAM" id="SSF53335">
    <property type="entry name" value="S-adenosyl-L-methionine-dependent methyltransferases"/>
    <property type="match status" value="1"/>
</dbReference>
<sequence length="382" mass="42319">MSAPQIPNLNTLRRGGGRGRFRARGGPDSSSSSGNKDRVVQGTDNDASVSRLSAVELGYLEDPFARALTPMGQEMRRLPIINRGTYVRTTAIDQLVASFLGLKADSDPTWKLKKKQIISLGAGSDTRVFRLLSLRPALDIIYHEIDFAVNNTAKIKAIQGTPLLQRVLGQSQVSISNEGDELHSPAYHIHAVDLRTLAQKGEGDKSTGQDPGRRLQDFVDTTLPTLLLSECCLIYLSPNDAAGVVRYFTHTLFPASQETETLALVLYEPIRPDDAFGRTMVANLATRGIQLQTLHQYASLGAQRQRLREHGFNGGQAAADVDFLWERWVAEEEKERVAALEMLDEVEEWKLLAQHYCVAWGWRKGSTRFTGWGDLDGQSAEE</sequence>
<keyword id="KW-0489">Methyltransferase</keyword>
<keyword id="KW-1185">Reference proteome</keyword>
<keyword id="KW-0949">S-adenosyl-L-methionine</keyword>
<keyword id="KW-0808">Transferase</keyword>
<comment type="function">
    <text evidence="1">Methylates the carboxyl group of the C-terminal leucine residue of protein phosphatase 2A catalytic subunits to form alpha-leucine ester residues.</text>
</comment>
<comment type="catalytic activity">
    <reaction>
        <text>[phosphatase 2A protein]-C-terminal L-leucine + S-adenosyl-L-methionine = [phosphatase 2A protein]-C-terminal L-leucine methyl ester + S-adenosyl-L-homocysteine</text>
        <dbReference type="Rhea" id="RHEA:48544"/>
        <dbReference type="Rhea" id="RHEA-COMP:12134"/>
        <dbReference type="Rhea" id="RHEA-COMP:12135"/>
        <dbReference type="ChEBI" id="CHEBI:57856"/>
        <dbReference type="ChEBI" id="CHEBI:59789"/>
        <dbReference type="ChEBI" id="CHEBI:90516"/>
        <dbReference type="ChEBI" id="CHEBI:90517"/>
        <dbReference type="EC" id="2.1.1.233"/>
    </reaction>
</comment>
<comment type="similarity">
    <text evidence="3">Belongs to the methyltransferase superfamily. LCMT family.</text>
</comment>
<evidence type="ECO:0000250" key="1"/>
<evidence type="ECO:0000256" key="2">
    <source>
        <dbReference type="SAM" id="MobiDB-lite"/>
    </source>
</evidence>
<evidence type="ECO:0000305" key="3"/>
<accession>Q5AQJ2</accession>
<accession>C8VRB1</accession>
<name>LCMT1_EMENI</name>